<accession>O83485</accession>
<feature type="chain" id="PRO_0000138356" description="UvrABC system protein C">
    <location>
        <begin position="1"/>
        <end position="691"/>
    </location>
</feature>
<feature type="domain" description="GIY-YIG" evidence="1">
    <location>
        <begin position="20"/>
        <end position="97"/>
    </location>
</feature>
<feature type="domain" description="UVR" evidence="1">
    <location>
        <begin position="204"/>
        <end position="239"/>
    </location>
</feature>
<feature type="region of interest" description="Disordered" evidence="2">
    <location>
        <begin position="662"/>
        <end position="691"/>
    </location>
</feature>
<feature type="compositionally biased region" description="Basic and acidic residues" evidence="2">
    <location>
        <begin position="668"/>
        <end position="680"/>
    </location>
</feature>
<sequence>MRPSESLVETLRIQALSAPSTSGVYLWKDVHGVVIYVGKAKSLRTRLTSYFRCRHDPKTRVLMSRAAALEYLQTQHEYEALLLENTLIKKHTPRYNICLKDGKTYPLLKLTCEPFPRIFRTRQFCQDGARYFGPFPDVQILDSFLKLILRTYKIRTCTTLRKRKNPCLYYHLKRCDAPCCGWVSPRTYQKDIHEITLLLEGNIDATVARLEKRMKRAVRQEAFEAAARIRDDIQAIRCITHKSLVQDMDERARDYIAWSSTGAIVTFAVLRMRGGKLNGRELFRTRSLKNEEEILSEFLITYYSDHTIPPHLFVHSSAGLAEHWLSHKAGTQCTVTLIPLHTFPTPQTPSSTVTTNAPTLAASQNSNAVQDSGLRSCSETSTMHTLQKAHDACTASEGTRENTPHESAHTPHHRAILAMAQLNAHEDITRYLKNRGADDALKELQKQLHLARIPTLIEGFDISHLGGKYTVASLICFKNGAPDTKNYRLFNLRAHDTRIDDFASMREAIARRYTHTPEGYTLPDLILVDGGIGHVSAAQHVLDALGLSIPLVGLAKRAEELFIPNSPTPLVLDRRNPALHMLQRIRDEAHRFAITRNRHLRTKKELVLSFERLPHVGKVRAHRLLAHFGSFRSLQSATPQDIATAIHIPLTQAHTILHAATRSTTAPVREEYKEHEHDPQGESPGPGRKTD</sequence>
<keyword id="KW-0963">Cytoplasm</keyword>
<keyword id="KW-0227">DNA damage</keyword>
<keyword id="KW-0228">DNA excision</keyword>
<keyword id="KW-0234">DNA repair</keyword>
<keyword id="KW-0267">Excision nuclease</keyword>
<keyword id="KW-1185">Reference proteome</keyword>
<keyword id="KW-0742">SOS response</keyword>
<evidence type="ECO:0000255" key="1">
    <source>
        <dbReference type="HAMAP-Rule" id="MF_00203"/>
    </source>
</evidence>
<evidence type="ECO:0000256" key="2">
    <source>
        <dbReference type="SAM" id="MobiDB-lite"/>
    </source>
</evidence>
<proteinExistence type="inferred from homology"/>
<gene>
    <name evidence="1" type="primary">uvrC</name>
    <name type="ordered locus">TP_0472</name>
</gene>
<comment type="function">
    <text evidence="1">The UvrABC repair system catalyzes the recognition and processing of DNA lesions. UvrC both incises the 5' and 3' sides of the lesion. The N-terminal half is responsible for the 3' incision and the C-terminal half is responsible for the 5' incision.</text>
</comment>
<comment type="subunit">
    <text evidence="1">Interacts with UvrB in an incision complex.</text>
</comment>
<comment type="subcellular location">
    <subcellularLocation>
        <location evidence="1">Cytoplasm</location>
    </subcellularLocation>
</comment>
<comment type="similarity">
    <text evidence="1">Belongs to the UvrC family.</text>
</comment>
<reference key="1">
    <citation type="journal article" date="1998" name="Science">
        <title>Complete genome sequence of Treponema pallidum, the syphilis spirochete.</title>
        <authorList>
            <person name="Fraser C.M."/>
            <person name="Norris S.J."/>
            <person name="Weinstock G.M."/>
            <person name="White O."/>
            <person name="Sutton G.G."/>
            <person name="Dodson R.J."/>
            <person name="Gwinn M.L."/>
            <person name="Hickey E.K."/>
            <person name="Clayton R.A."/>
            <person name="Ketchum K.A."/>
            <person name="Sodergren E."/>
            <person name="Hardham J.M."/>
            <person name="McLeod M.P."/>
            <person name="Salzberg S.L."/>
            <person name="Peterson J.D."/>
            <person name="Khalak H.G."/>
            <person name="Richardson D.L."/>
            <person name="Howell J.K."/>
            <person name="Chidambaram M."/>
            <person name="Utterback T.R."/>
            <person name="McDonald L.A."/>
            <person name="Artiach P."/>
            <person name="Bowman C."/>
            <person name="Cotton M.D."/>
            <person name="Fujii C."/>
            <person name="Garland S.A."/>
            <person name="Hatch B."/>
            <person name="Horst K."/>
            <person name="Roberts K.M."/>
            <person name="Sandusky M."/>
            <person name="Weidman J.F."/>
            <person name="Smith H.O."/>
            <person name="Venter J.C."/>
        </authorList>
    </citation>
    <scope>NUCLEOTIDE SEQUENCE [LARGE SCALE GENOMIC DNA]</scope>
    <source>
        <strain>Nichols</strain>
    </source>
</reference>
<dbReference type="EMBL" id="AE000520">
    <property type="protein sequence ID" value="AAC65452.1"/>
    <property type="molecule type" value="Genomic_DNA"/>
</dbReference>
<dbReference type="PIR" id="B71322">
    <property type="entry name" value="B71322"/>
</dbReference>
<dbReference type="RefSeq" id="WP_010881921.1">
    <property type="nucleotide sequence ID" value="NC_021490.2"/>
</dbReference>
<dbReference type="SMR" id="O83485"/>
<dbReference type="IntAct" id="O83485">
    <property type="interactions" value="5"/>
</dbReference>
<dbReference type="STRING" id="243276.TP_0472"/>
<dbReference type="EnsemblBacteria" id="AAC65452">
    <property type="protein sequence ID" value="AAC65452"/>
    <property type="gene ID" value="TP_0472"/>
</dbReference>
<dbReference type="GeneID" id="93876239"/>
<dbReference type="KEGG" id="tpa:TP_0472"/>
<dbReference type="KEGG" id="tpw:TPANIC_0472"/>
<dbReference type="eggNOG" id="COG0322">
    <property type="taxonomic scope" value="Bacteria"/>
</dbReference>
<dbReference type="HOGENOM" id="CLU_014841_3_2_12"/>
<dbReference type="OrthoDB" id="9804933at2"/>
<dbReference type="Proteomes" id="UP000000811">
    <property type="component" value="Chromosome"/>
</dbReference>
<dbReference type="GO" id="GO:0005737">
    <property type="term" value="C:cytoplasm"/>
    <property type="evidence" value="ECO:0007669"/>
    <property type="project" value="UniProtKB-SubCell"/>
</dbReference>
<dbReference type="GO" id="GO:0009380">
    <property type="term" value="C:excinuclease repair complex"/>
    <property type="evidence" value="ECO:0007669"/>
    <property type="project" value="InterPro"/>
</dbReference>
<dbReference type="GO" id="GO:0003677">
    <property type="term" value="F:DNA binding"/>
    <property type="evidence" value="ECO:0007669"/>
    <property type="project" value="UniProtKB-UniRule"/>
</dbReference>
<dbReference type="GO" id="GO:0009381">
    <property type="term" value="F:excinuclease ABC activity"/>
    <property type="evidence" value="ECO:0007669"/>
    <property type="project" value="UniProtKB-UniRule"/>
</dbReference>
<dbReference type="GO" id="GO:0006289">
    <property type="term" value="P:nucleotide-excision repair"/>
    <property type="evidence" value="ECO:0007669"/>
    <property type="project" value="UniProtKB-UniRule"/>
</dbReference>
<dbReference type="GO" id="GO:0009432">
    <property type="term" value="P:SOS response"/>
    <property type="evidence" value="ECO:0007669"/>
    <property type="project" value="UniProtKB-UniRule"/>
</dbReference>
<dbReference type="CDD" id="cd10434">
    <property type="entry name" value="GIY-YIG_UvrC_Cho"/>
    <property type="match status" value="1"/>
</dbReference>
<dbReference type="FunFam" id="3.40.1440.10:FF:000001">
    <property type="entry name" value="UvrABC system protein C"/>
    <property type="match status" value="1"/>
</dbReference>
<dbReference type="Gene3D" id="1.10.150.20">
    <property type="entry name" value="5' to 3' exonuclease, C-terminal subdomain"/>
    <property type="match status" value="1"/>
</dbReference>
<dbReference type="Gene3D" id="3.40.1440.10">
    <property type="entry name" value="GIY-YIG endonuclease"/>
    <property type="match status" value="1"/>
</dbReference>
<dbReference type="Gene3D" id="4.10.860.10">
    <property type="entry name" value="UVR domain"/>
    <property type="match status" value="1"/>
</dbReference>
<dbReference type="Gene3D" id="3.30.420.340">
    <property type="entry name" value="UvrC, RNAse H endonuclease domain"/>
    <property type="match status" value="1"/>
</dbReference>
<dbReference type="HAMAP" id="MF_00203">
    <property type="entry name" value="UvrC"/>
    <property type="match status" value="1"/>
</dbReference>
<dbReference type="InterPro" id="IPR000305">
    <property type="entry name" value="GIY-YIG_endonuc"/>
</dbReference>
<dbReference type="InterPro" id="IPR035901">
    <property type="entry name" value="GIY-YIG_endonuc_sf"/>
</dbReference>
<dbReference type="InterPro" id="IPR047296">
    <property type="entry name" value="GIY-YIG_UvrC_Cho"/>
</dbReference>
<dbReference type="InterPro" id="IPR010994">
    <property type="entry name" value="RuvA_2-like"/>
</dbReference>
<dbReference type="InterPro" id="IPR001943">
    <property type="entry name" value="UVR_dom"/>
</dbReference>
<dbReference type="InterPro" id="IPR036876">
    <property type="entry name" value="UVR_dom_sf"/>
</dbReference>
<dbReference type="InterPro" id="IPR050066">
    <property type="entry name" value="UvrABC_protein_C"/>
</dbReference>
<dbReference type="InterPro" id="IPR004791">
    <property type="entry name" value="UvrC"/>
</dbReference>
<dbReference type="InterPro" id="IPR001162">
    <property type="entry name" value="UvrC_RNase_H_dom"/>
</dbReference>
<dbReference type="InterPro" id="IPR038476">
    <property type="entry name" value="UvrC_RNase_H_dom_sf"/>
</dbReference>
<dbReference type="NCBIfam" id="NF011266">
    <property type="entry name" value="PRK14672.1"/>
    <property type="match status" value="1"/>
</dbReference>
<dbReference type="NCBIfam" id="TIGR00194">
    <property type="entry name" value="uvrC"/>
    <property type="match status" value="1"/>
</dbReference>
<dbReference type="PANTHER" id="PTHR30562:SF1">
    <property type="entry name" value="UVRABC SYSTEM PROTEIN C"/>
    <property type="match status" value="1"/>
</dbReference>
<dbReference type="PANTHER" id="PTHR30562">
    <property type="entry name" value="UVRC/OXIDOREDUCTASE"/>
    <property type="match status" value="1"/>
</dbReference>
<dbReference type="Pfam" id="PF01541">
    <property type="entry name" value="GIY-YIG"/>
    <property type="match status" value="1"/>
</dbReference>
<dbReference type="Pfam" id="PF02151">
    <property type="entry name" value="UVR"/>
    <property type="match status" value="1"/>
</dbReference>
<dbReference type="Pfam" id="PF22920">
    <property type="entry name" value="UvrC_RNaseH"/>
    <property type="match status" value="1"/>
</dbReference>
<dbReference type="Pfam" id="PF08459">
    <property type="entry name" value="UvrC_RNaseH_dom"/>
    <property type="match status" value="1"/>
</dbReference>
<dbReference type="SMART" id="SM00465">
    <property type="entry name" value="GIYc"/>
    <property type="match status" value="1"/>
</dbReference>
<dbReference type="SUPFAM" id="SSF46600">
    <property type="entry name" value="C-terminal UvrC-binding domain of UvrB"/>
    <property type="match status" value="1"/>
</dbReference>
<dbReference type="SUPFAM" id="SSF82771">
    <property type="entry name" value="GIY-YIG endonuclease"/>
    <property type="match status" value="1"/>
</dbReference>
<dbReference type="SUPFAM" id="SSF47781">
    <property type="entry name" value="RuvA domain 2-like"/>
    <property type="match status" value="1"/>
</dbReference>
<dbReference type="PROSITE" id="PS50164">
    <property type="entry name" value="GIY_YIG"/>
    <property type="match status" value="1"/>
</dbReference>
<dbReference type="PROSITE" id="PS50151">
    <property type="entry name" value="UVR"/>
    <property type="match status" value="1"/>
</dbReference>
<dbReference type="PROSITE" id="PS50165">
    <property type="entry name" value="UVRC"/>
    <property type="match status" value="1"/>
</dbReference>
<protein>
    <recommendedName>
        <fullName evidence="1">UvrABC system protein C</fullName>
        <shortName evidence="1">Protein UvrC</shortName>
    </recommendedName>
    <alternativeName>
        <fullName evidence="1">Excinuclease ABC subunit C</fullName>
    </alternativeName>
</protein>
<organism>
    <name type="scientific">Treponema pallidum (strain Nichols)</name>
    <dbReference type="NCBI Taxonomy" id="243276"/>
    <lineage>
        <taxon>Bacteria</taxon>
        <taxon>Pseudomonadati</taxon>
        <taxon>Spirochaetota</taxon>
        <taxon>Spirochaetia</taxon>
        <taxon>Spirochaetales</taxon>
        <taxon>Treponemataceae</taxon>
        <taxon>Treponema</taxon>
    </lineage>
</organism>
<name>UVRC_TREPA</name>